<name>PNPH_HUMAN</name>
<organism>
    <name type="scientific">Homo sapiens</name>
    <name type="common">Human</name>
    <dbReference type="NCBI Taxonomy" id="9606"/>
    <lineage>
        <taxon>Eukaryota</taxon>
        <taxon>Metazoa</taxon>
        <taxon>Chordata</taxon>
        <taxon>Craniata</taxon>
        <taxon>Vertebrata</taxon>
        <taxon>Euteleostomi</taxon>
        <taxon>Mammalia</taxon>
        <taxon>Eutheria</taxon>
        <taxon>Euarchontoglires</taxon>
        <taxon>Primates</taxon>
        <taxon>Haplorrhini</taxon>
        <taxon>Catarrhini</taxon>
        <taxon>Hominidae</taxon>
        <taxon>Homo</taxon>
    </lineage>
</organism>
<reference key="1">
    <citation type="journal article" date="1984" name="Nucleic Acids Res.">
        <title>Human purine nucleoside phosphorylase cDNA sequence and genomic clone characterization.</title>
        <authorList>
            <person name="Williams S.R."/>
            <person name="Goddard J.M."/>
            <person name="Martin D.W. Jr."/>
        </authorList>
    </citation>
    <scope>NUCLEOTIDE SEQUENCE [MRNA]</scope>
    <scope>VARIANT SER-51</scope>
</reference>
<reference key="2">
    <citation type="journal article" date="1987" name="J. Biol. Chem.">
        <title>A human purine nucleoside phosphorylase deficiency caused by a single base change.</title>
        <authorList>
            <person name="Williams S.R."/>
            <person name="Gekeler V."/>
            <person name="McIvor R.S."/>
            <person name="Martin D.W. Jr."/>
        </authorList>
    </citation>
    <scope>NUCLEOTIDE SEQUENCE [GENOMIC DNA]</scope>
    <scope>VARIANT PNPD LYS-89</scope>
    <scope>VARIANT SER-51</scope>
</reference>
<reference key="3">
    <citation type="journal article" date="2003" name="Environ. Health Perspect.">
        <title>Genetic variation in genes associated with arsenic metabolism: glutathione S-transferase omega 1-1 and purine nucleoside phosphorylase polymorphisms in European and indigenous Americans.</title>
        <authorList>
            <person name="Yu L."/>
            <person name="Kalla K."/>
            <person name="Guthrie E."/>
            <person name="Vidrine A."/>
            <person name="Klimecki W.T."/>
        </authorList>
    </citation>
    <scope>NUCLEOTIDE SEQUENCE [GENOMIC DNA]</scope>
    <scope>VARIANT SER-51</scope>
</reference>
<reference key="4">
    <citation type="journal article" date="2004" name="Nat. Genet.">
        <title>Complete sequencing and characterization of 21,243 full-length human cDNAs.</title>
        <authorList>
            <person name="Ota T."/>
            <person name="Suzuki Y."/>
            <person name="Nishikawa T."/>
            <person name="Otsuki T."/>
            <person name="Sugiyama T."/>
            <person name="Irie R."/>
            <person name="Wakamatsu A."/>
            <person name="Hayashi K."/>
            <person name="Sato H."/>
            <person name="Nagai K."/>
            <person name="Kimura K."/>
            <person name="Makita H."/>
            <person name="Sekine M."/>
            <person name="Obayashi M."/>
            <person name="Nishi T."/>
            <person name="Shibahara T."/>
            <person name="Tanaka T."/>
            <person name="Ishii S."/>
            <person name="Yamamoto J."/>
            <person name="Saito K."/>
            <person name="Kawai Y."/>
            <person name="Isono Y."/>
            <person name="Nakamura Y."/>
            <person name="Nagahari K."/>
            <person name="Murakami K."/>
            <person name="Yasuda T."/>
            <person name="Iwayanagi T."/>
            <person name="Wagatsuma M."/>
            <person name="Shiratori A."/>
            <person name="Sudo H."/>
            <person name="Hosoiri T."/>
            <person name="Kaku Y."/>
            <person name="Kodaira H."/>
            <person name="Kondo H."/>
            <person name="Sugawara M."/>
            <person name="Takahashi M."/>
            <person name="Kanda K."/>
            <person name="Yokoi T."/>
            <person name="Furuya T."/>
            <person name="Kikkawa E."/>
            <person name="Omura Y."/>
            <person name="Abe K."/>
            <person name="Kamihara K."/>
            <person name="Katsuta N."/>
            <person name="Sato K."/>
            <person name="Tanikawa M."/>
            <person name="Yamazaki M."/>
            <person name="Ninomiya K."/>
            <person name="Ishibashi T."/>
            <person name="Yamashita H."/>
            <person name="Murakawa K."/>
            <person name="Fujimori K."/>
            <person name="Tanai H."/>
            <person name="Kimata M."/>
            <person name="Watanabe M."/>
            <person name="Hiraoka S."/>
            <person name="Chiba Y."/>
            <person name="Ishida S."/>
            <person name="Ono Y."/>
            <person name="Takiguchi S."/>
            <person name="Watanabe S."/>
            <person name="Yosida M."/>
            <person name="Hotuta T."/>
            <person name="Kusano J."/>
            <person name="Kanehori K."/>
            <person name="Takahashi-Fujii A."/>
            <person name="Hara H."/>
            <person name="Tanase T.-O."/>
            <person name="Nomura Y."/>
            <person name="Togiya S."/>
            <person name="Komai F."/>
            <person name="Hara R."/>
            <person name="Takeuchi K."/>
            <person name="Arita M."/>
            <person name="Imose N."/>
            <person name="Musashino K."/>
            <person name="Yuuki H."/>
            <person name="Oshima A."/>
            <person name="Sasaki N."/>
            <person name="Aotsuka S."/>
            <person name="Yoshikawa Y."/>
            <person name="Matsunawa H."/>
            <person name="Ichihara T."/>
            <person name="Shiohata N."/>
            <person name="Sano S."/>
            <person name="Moriya S."/>
            <person name="Momiyama H."/>
            <person name="Satoh N."/>
            <person name="Takami S."/>
            <person name="Terashima Y."/>
            <person name="Suzuki O."/>
            <person name="Nakagawa S."/>
            <person name="Senoh A."/>
            <person name="Mizoguchi H."/>
            <person name="Goto Y."/>
            <person name="Shimizu F."/>
            <person name="Wakebe H."/>
            <person name="Hishigaki H."/>
            <person name="Watanabe T."/>
            <person name="Sugiyama A."/>
            <person name="Takemoto M."/>
            <person name="Kawakami B."/>
            <person name="Yamazaki M."/>
            <person name="Watanabe K."/>
            <person name="Kumagai A."/>
            <person name="Itakura S."/>
            <person name="Fukuzumi Y."/>
            <person name="Fujimori Y."/>
            <person name="Komiyama M."/>
            <person name="Tashiro H."/>
            <person name="Tanigami A."/>
            <person name="Fujiwara T."/>
            <person name="Ono T."/>
            <person name="Yamada K."/>
            <person name="Fujii Y."/>
            <person name="Ozaki K."/>
            <person name="Hirao M."/>
            <person name="Ohmori Y."/>
            <person name="Kawabata A."/>
            <person name="Hikiji T."/>
            <person name="Kobatake N."/>
            <person name="Inagaki H."/>
            <person name="Ikema Y."/>
            <person name="Okamoto S."/>
            <person name="Okitani R."/>
            <person name="Kawakami T."/>
            <person name="Noguchi S."/>
            <person name="Itoh T."/>
            <person name="Shigeta K."/>
            <person name="Senba T."/>
            <person name="Matsumura K."/>
            <person name="Nakajima Y."/>
            <person name="Mizuno T."/>
            <person name="Morinaga M."/>
            <person name="Sasaki M."/>
            <person name="Togashi T."/>
            <person name="Oyama M."/>
            <person name="Hata H."/>
            <person name="Watanabe M."/>
            <person name="Komatsu T."/>
            <person name="Mizushima-Sugano J."/>
            <person name="Satoh T."/>
            <person name="Shirai Y."/>
            <person name="Takahashi Y."/>
            <person name="Nakagawa K."/>
            <person name="Okumura K."/>
            <person name="Nagase T."/>
            <person name="Nomura N."/>
            <person name="Kikuchi H."/>
            <person name="Masuho Y."/>
            <person name="Yamashita R."/>
            <person name="Nakai K."/>
            <person name="Yada T."/>
            <person name="Nakamura Y."/>
            <person name="Ohara O."/>
            <person name="Isogai T."/>
            <person name="Sugano S."/>
        </authorList>
    </citation>
    <scope>NUCLEOTIDE SEQUENCE [LARGE SCALE MRNA]</scope>
    <scope>VARIANT SER-51</scope>
    <source>
        <tissue>Tongue</tissue>
    </source>
</reference>
<reference key="5">
    <citation type="submission" date="2004-05" db="EMBL/GenBank/DDBJ databases">
        <title>Cloning of human full open reading frames in Gateway(TM) system entry vector (pDONR201).</title>
        <authorList>
            <person name="Ebert L."/>
            <person name="Schick M."/>
            <person name="Neubert P."/>
            <person name="Schatten R."/>
            <person name="Henze S."/>
            <person name="Korn B."/>
        </authorList>
    </citation>
    <scope>NUCLEOTIDE SEQUENCE [LARGE SCALE MRNA]</scope>
</reference>
<reference key="6">
    <citation type="submission" date="2005-09" db="EMBL/GenBank/DDBJ databases">
        <authorList>
            <person name="Mural R.J."/>
            <person name="Istrail S."/>
            <person name="Sutton G.G."/>
            <person name="Florea L."/>
            <person name="Halpern A.L."/>
            <person name="Mobarry C.M."/>
            <person name="Lippert R."/>
            <person name="Walenz B."/>
            <person name="Shatkay H."/>
            <person name="Dew I."/>
            <person name="Miller J.R."/>
            <person name="Flanigan M.J."/>
            <person name="Edwards N.J."/>
            <person name="Bolanos R."/>
            <person name="Fasulo D."/>
            <person name="Halldorsson B.V."/>
            <person name="Hannenhalli S."/>
            <person name="Turner R."/>
            <person name="Yooseph S."/>
            <person name="Lu F."/>
            <person name="Nusskern D.R."/>
            <person name="Shue B.C."/>
            <person name="Zheng X.H."/>
            <person name="Zhong F."/>
            <person name="Delcher A.L."/>
            <person name="Huson D.H."/>
            <person name="Kravitz S.A."/>
            <person name="Mouchard L."/>
            <person name="Reinert K."/>
            <person name="Remington K.A."/>
            <person name="Clark A.G."/>
            <person name="Waterman M.S."/>
            <person name="Eichler E.E."/>
            <person name="Adams M.D."/>
            <person name="Hunkapiller M.W."/>
            <person name="Myers E.W."/>
            <person name="Venter J.C."/>
        </authorList>
    </citation>
    <scope>NUCLEOTIDE SEQUENCE [LARGE SCALE GENOMIC DNA]</scope>
</reference>
<reference key="7">
    <citation type="journal article" date="2004" name="Genome Res.">
        <title>The status, quality, and expansion of the NIH full-length cDNA project: the Mammalian Gene Collection (MGC).</title>
        <authorList>
            <consortium name="The MGC Project Team"/>
        </authorList>
    </citation>
    <scope>NUCLEOTIDE SEQUENCE [LARGE SCALE MRNA]</scope>
    <source>
        <tissue>Ovary</tissue>
    </source>
</reference>
<reference key="8">
    <citation type="submission" date="2006-02" db="UniProtKB">
        <authorList>
            <person name="Bienvenut W.V."/>
            <person name="Claeys D."/>
        </authorList>
    </citation>
    <scope>PROTEIN SEQUENCE OF 1-22; 42-58; 68-76; 96-148; 212-229; 235-265 AND 271-287</scope>
    <scope>ACETYLATION AT MET-1</scope>
    <scope>IDENTIFICATION BY MASS SPECTROMETRY</scope>
    <source>
        <tissue>Platelet</tissue>
    </source>
</reference>
<reference key="9">
    <citation type="journal article" date="1997" name="Biochemistry">
        <title>Purine nucleoside phosphorylase. 3. Reversal of purine base specificity by site-directed mutagenesis.</title>
        <authorList>
            <person name="Stoeckler J.D."/>
            <person name="Poirot A.F."/>
            <person name="Smith R.M."/>
            <person name="Parks R.E. Jr."/>
            <person name="Ealick S.E."/>
            <person name="Takabayashi K."/>
            <person name="Erion M.D."/>
        </authorList>
    </citation>
    <scope>FUNCTION</scope>
    <scope>CATALYTIC ACTIVITY</scope>
    <scope>BIOPHYSICOCHEMICAL PROPERTIES</scope>
    <scope>PATHWAY</scope>
    <scope>MUTAGENESIS OF GLU-201 AND ASN-243</scope>
</reference>
<reference key="10">
    <citation type="journal article" date="2009" name="Anal. Chem.">
        <title>Lys-N and trypsin cover complementary parts of the phosphoproteome in a refined SCX-based approach.</title>
        <authorList>
            <person name="Gauci S."/>
            <person name="Helbig A.O."/>
            <person name="Slijper M."/>
            <person name="Krijgsveld J."/>
            <person name="Heck A.J."/>
            <person name="Mohammed S."/>
        </authorList>
    </citation>
    <scope>ACETYLATION [LARGE SCALE ANALYSIS] AT MET-1</scope>
    <scope>IDENTIFICATION BY MASS SPECTROMETRY [LARGE SCALE ANALYSIS]</scope>
</reference>
<reference key="11">
    <citation type="journal article" date="2011" name="BMC Syst. Biol.">
        <title>Initial characterization of the human central proteome.</title>
        <authorList>
            <person name="Burkard T.R."/>
            <person name="Planyavsky M."/>
            <person name="Kaupe I."/>
            <person name="Breitwieser F.P."/>
            <person name="Buerckstuemmer T."/>
            <person name="Bennett K.L."/>
            <person name="Superti-Furga G."/>
            <person name="Colinge J."/>
        </authorList>
    </citation>
    <scope>IDENTIFICATION BY MASS SPECTROMETRY [LARGE SCALE ANALYSIS]</scope>
</reference>
<reference key="12">
    <citation type="journal article" date="2012" name="Mol. Cell. Proteomics">
        <title>Comparative large-scale characterisation of plant vs. mammal proteins reveals similar and idiosyncratic N-alpha acetylation features.</title>
        <authorList>
            <person name="Bienvenut W.V."/>
            <person name="Sumpton D."/>
            <person name="Martinez A."/>
            <person name="Lilla S."/>
            <person name="Espagne C."/>
            <person name="Meinnel T."/>
            <person name="Giglione C."/>
        </authorList>
    </citation>
    <scope>ACETYLATION [LARGE SCALE ANALYSIS] AT MET-1</scope>
    <scope>IDENTIFICATION BY MASS SPECTROMETRY [LARGE SCALE ANALYSIS]</scope>
</reference>
<reference key="13">
    <citation type="journal article" date="2012" name="PLoS ONE">
        <title>Assessment of the red cell proteome of young patients with unexplained hemolytic anemia by two-dimensional differential in-gel electrophoresis (DIGE).</title>
        <authorList>
            <person name="von Lohneysen K."/>
            <person name="Scott T.M."/>
            <person name="Soldau K."/>
            <person name="Xu X."/>
            <person name="Friedman J.S."/>
        </authorList>
    </citation>
    <scope>TISSUE SPECIFICITY</scope>
    <scope>SUBCELLULAR LOCATION</scope>
</reference>
<reference key="14">
    <citation type="journal article" date="2013" name="J. Proteome Res.">
        <title>Toward a comprehensive characterization of a human cancer cell phosphoproteome.</title>
        <authorList>
            <person name="Zhou H."/>
            <person name="Di Palma S."/>
            <person name="Preisinger C."/>
            <person name="Peng M."/>
            <person name="Polat A.N."/>
            <person name="Heck A.J."/>
            <person name="Mohammed S."/>
        </authorList>
    </citation>
    <scope>PHOSPHORYLATION [LARGE SCALE ANALYSIS] AT SER-251</scope>
    <scope>IDENTIFICATION BY MASS SPECTROMETRY [LARGE SCALE ANALYSIS]</scope>
    <source>
        <tissue>Erythroleukemia</tissue>
    </source>
</reference>
<reference key="15">
    <citation type="journal article" date="2014" name="J. Proteomics">
        <title>An enzyme assisted RP-RPLC approach for in-depth analysis of human liver phosphoproteome.</title>
        <authorList>
            <person name="Bian Y."/>
            <person name="Song C."/>
            <person name="Cheng K."/>
            <person name="Dong M."/>
            <person name="Wang F."/>
            <person name="Huang J."/>
            <person name="Sun D."/>
            <person name="Wang L."/>
            <person name="Ye M."/>
            <person name="Zou H."/>
        </authorList>
    </citation>
    <scope>IDENTIFICATION BY MASS SPECTROMETRY [LARGE SCALE ANALYSIS]</scope>
    <source>
        <tissue>Liver</tissue>
    </source>
</reference>
<reference key="16">
    <citation type="journal article" date="2015" name="Proteomics">
        <title>N-terminome analysis of the human mitochondrial proteome.</title>
        <authorList>
            <person name="Vaca Jacome A.S."/>
            <person name="Rabilloud T."/>
            <person name="Schaeffer-Reiss C."/>
            <person name="Rompais M."/>
            <person name="Ayoub D."/>
            <person name="Lane L."/>
            <person name="Bairoch A."/>
            <person name="Van Dorsselaer A."/>
            <person name="Carapito C."/>
        </authorList>
    </citation>
    <scope>IDENTIFICATION BY MASS SPECTROMETRY [LARGE SCALE ANALYSIS]</scope>
</reference>
<reference key="17">
    <citation type="journal article" date="1990" name="J. Biol. Chem.">
        <title>Three-dimensional structure of human erythrocytic purine nucleoside phosphorylase at 3.2-A resolution.</title>
        <authorList>
            <person name="Ealick S.E."/>
            <person name="Rule S.A."/>
            <person name="Carter D.C."/>
            <person name="Greenhough T.J."/>
            <person name="Babu Y.S."/>
            <person name="Cook W.J."/>
            <person name="Habash J."/>
            <person name="Helliwell J.R."/>
            <person name="Stoeckler J.D."/>
            <person name="Parks R.E. Jr."/>
            <person name="Chen S.-F."/>
            <person name="Bugg C.E."/>
        </authorList>
    </citation>
    <scope>X-RAY CRYSTALLOGRAPHY (3.2 ANGSTROMS)</scope>
</reference>
<reference evidence="19 20" key="18">
    <citation type="journal article" date="1991" name="Proc. Natl. Acad. Sci. U.S.A.">
        <title>Application of crystallographic and modeling methods in the design of purine nucleoside phosphorylase inhibitors.</title>
        <authorList>
            <person name="Ealick S.E."/>
            <person name="Babu Y.S."/>
            <person name="Bugg C.E."/>
            <person name="Erion M.D."/>
            <person name="Guida W.C."/>
            <person name="Montgomery J.A."/>
            <person name="Secrist J.A."/>
        </authorList>
    </citation>
    <scope>X-RAY CRYSTALLOGRAPHY (2.75 ANGSTROMS) IN COMPLEX WITH GUANINE AND PHOSPHATE ANALOG</scope>
</reference>
<reference evidence="18 21" key="19">
    <citation type="journal article" date="2004" name="Biochem. Biophys. Res. Commun.">
        <title>Structures of human purine nucleoside phosphorylase complexed with inosine and ddI.</title>
        <authorList>
            <person name="Canduri F."/>
            <person name="dos Santos D.M."/>
            <person name="Silva R.G."/>
            <person name="Mendes M.A."/>
            <person name="Basso L.A."/>
            <person name="Palma M.S."/>
            <person name="de Azevedo W.F."/>
            <person name="Santos D.S."/>
        </authorList>
    </citation>
    <scope>X-RAY CRYSTALLOGRAPHY (2.80 ANGSTROMS) OF 2-289 IN COMPLEX WITH INOSINE; DIDEOXYINOSINE AND PHOSPHATE ANALOG</scope>
</reference>
<reference evidence="22 23 24 25" key="20">
    <citation type="journal article" date="2013" name="Chem. Biol.">
        <title>Catalytic site conformations in human PNP by 19F-NMR and crystallography.</title>
        <authorList>
            <person name="Suarez J."/>
            <person name="Haapalainen A.M."/>
            <person name="Cahill S.M."/>
            <person name="Ho M.C."/>
            <person name="Yan F."/>
            <person name="Almo S.C."/>
            <person name="Schramm V.L."/>
        </authorList>
    </citation>
    <scope>X-RAY CRYSTALLOGRAPHY (1.70 ANGSTROMS) OF MUTANT TRP-257 IN COMPLEX WITH GUANINE; PHOSPHATE AND INHIBITOR DADME-IMMG</scope>
    <scope>FUNCTION</scope>
    <scope>CATALYTIC ACTIVITY</scope>
    <scope>ACTIVITY REGULATION</scope>
    <scope>BIOPHYSICOCHEMICAL PROPERTIES</scope>
    <scope>SUBUNIT</scope>
    <scope>MUTAGENESIS OF HIS-64 AND HIS-257</scope>
</reference>
<reference key="21">
    <citation type="journal article" date="1992" name="Am. J. Hum. Genet.">
        <title>Molecular analysis of mutations in a patient with purine nucleoside phosphorylase deficiency.</title>
        <authorList>
            <person name="Aust M.R."/>
            <person name="Andrews L.G."/>
            <person name="Barrett M.J."/>
            <person name="Norby-Slycord C.J."/>
            <person name="Markert M.L."/>
        </authorList>
    </citation>
    <scope>VARIANT SER-51</scope>
    <scope>VARIANTS PNPD GLY-128 AND PRO-234</scope>
</reference>
<reference key="22">
    <citation type="journal article" date="1996" name="Hum. Genet.">
        <title>Two novel missense and frameshift mutations in exons 5 and 6 of the purine nucleoside phosphorylase (PNP) gene in a severe combined immunodeficiency (SCID) patient.</title>
        <authorList>
            <person name="Pannicke U."/>
            <person name="Tuchschmid P."/>
            <person name="Friedrich W."/>
            <person name="Bartram C.R."/>
            <person name="Schwarz K."/>
        </authorList>
    </citation>
    <scope>VARIANT PNPD CYS-192</scope>
</reference>
<sequence>MENGYTYEDYKNTAEWLLSHTKHRPQVAIICGSGLGGLTDKLTQAQIFDYGEIPNFPRSTVPGHAGRLVFGFLNGRACVMMQGRFHMYEGYPLWKVTFPVRVFHLLGVDTLVVTNAAGGLNPKFEVGDIMLIRDHINLPGFSGQNPLRGPNDERFGDRFPAMSDAYDRTMRQRALSTWKQMGEQRELQEGTYVMVAGPSFETVAECRVLQKLGADAVGMSTVPEVIVARHCGLRVFGFSLITNKVIMDYESLEKANHEEVLAAGKQAAQKLEQFVSILMASIPLPDKAS</sequence>
<dbReference type="EC" id="2.4.2.1" evidence="8 12"/>
<dbReference type="EMBL" id="X00737">
    <property type="protein sequence ID" value="CAA25320.1"/>
    <property type="molecule type" value="mRNA"/>
</dbReference>
<dbReference type="EMBL" id="M13953">
    <property type="protein sequence ID" value="AAA36460.1"/>
    <property type="molecule type" value="Genomic_DNA"/>
</dbReference>
<dbReference type="EMBL" id="J02672">
    <property type="protein sequence ID" value="AAA36460.1"/>
    <property type="status" value="JOINED"/>
    <property type="molecule type" value="Genomic_DNA"/>
</dbReference>
<dbReference type="EMBL" id="M13951">
    <property type="protein sequence ID" value="AAA36460.1"/>
    <property type="status" value="JOINED"/>
    <property type="molecule type" value="Genomic_DNA"/>
</dbReference>
<dbReference type="EMBL" id="M13952">
    <property type="protein sequence ID" value="AAA36460.1"/>
    <property type="status" value="JOINED"/>
    <property type="molecule type" value="Genomic_DNA"/>
</dbReference>
<dbReference type="EMBL" id="AY817667">
    <property type="protein sequence ID" value="AAV68044.1"/>
    <property type="molecule type" value="Genomic_DNA"/>
</dbReference>
<dbReference type="EMBL" id="AK313490">
    <property type="protein sequence ID" value="BAG36272.1"/>
    <property type="molecule type" value="mRNA"/>
</dbReference>
<dbReference type="EMBL" id="CR407607">
    <property type="protein sequence ID" value="CAG28535.1"/>
    <property type="molecule type" value="mRNA"/>
</dbReference>
<dbReference type="EMBL" id="CH471078">
    <property type="protein sequence ID" value="EAW66458.1"/>
    <property type="molecule type" value="Genomic_DNA"/>
</dbReference>
<dbReference type="EMBL" id="CH471078">
    <property type="protein sequence ID" value="EAW66459.1"/>
    <property type="molecule type" value="Genomic_DNA"/>
</dbReference>
<dbReference type="EMBL" id="BC104206">
    <property type="protein sequence ID" value="AAI04207.1"/>
    <property type="molecule type" value="mRNA"/>
</dbReference>
<dbReference type="EMBL" id="BC104207">
    <property type="protein sequence ID" value="AAI04208.1"/>
    <property type="molecule type" value="mRNA"/>
</dbReference>
<dbReference type="EMBL" id="BC106074">
    <property type="protein sequence ID" value="AAI06075.1"/>
    <property type="molecule type" value="mRNA"/>
</dbReference>
<dbReference type="CCDS" id="CCDS9552.1"/>
<dbReference type="PIR" id="A00578">
    <property type="entry name" value="PHHUPN"/>
</dbReference>
<dbReference type="RefSeq" id="NP_000261.2">
    <property type="nucleotide sequence ID" value="NM_000270.4"/>
</dbReference>
<dbReference type="PDB" id="1M73">
    <property type="method" value="X-ray"/>
    <property type="resolution" value="2.30 A"/>
    <property type="chains" value="E=2-289"/>
</dbReference>
<dbReference type="PDB" id="1PF7">
    <property type="method" value="X-ray"/>
    <property type="resolution" value="2.60 A"/>
    <property type="chains" value="E=1-289"/>
</dbReference>
<dbReference type="PDB" id="1PWY">
    <property type="method" value="X-ray"/>
    <property type="resolution" value="2.80 A"/>
    <property type="chains" value="E=2-289"/>
</dbReference>
<dbReference type="PDB" id="1RCT">
    <property type="method" value="X-ray"/>
    <property type="resolution" value="2.80 A"/>
    <property type="chains" value="E=2-289"/>
</dbReference>
<dbReference type="PDB" id="1RFG">
    <property type="method" value="X-ray"/>
    <property type="resolution" value="2.90 A"/>
    <property type="chains" value="E=2-289"/>
</dbReference>
<dbReference type="PDB" id="1RR6">
    <property type="method" value="X-ray"/>
    <property type="resolution" value="2.50 A"/>
    <property type="chains" value="A=1-289"/>
</dbReference>
<dbReference type="PDB" id="1RSZ">
    <property type="method" value="X-ray"/>
    <property type="resolution" value="2.20 A"/>
    <property type="chains" value="A=1-289"/>
</dbReference>
<dbReference type="PDB" id="1RT9">
    <property type="method" value="X-ray"/>
    <property type="resolution" value="2.30 A"/>
    <property type="chains" value="A=1-289"/>
</dbReference>
<dbReference type="PDB" id="1ULA">
    <property type="method" value="X-ray"/>
    <property type="resolution" value="2.75 A"/>
    <property type="chains" value="A=1-289"/>
</dbReference>
<dbReference type="PDB" id="1ULB">
    <property type="method" value="X-ray"/>
    <property type="resolution" value="2.75 A"/>
    <property type="chains" value="A=1-289"/>
</dbReference>
<dbReference type="PDB" id="1V2H">
    <property type="method" value="X-ray"/>
    <property type="resolution" value="2.70 A"/>
    <property type="chains" value="E=2-289"/>
</dbReference>
<dbReference type="PDB" id="1V3Q">
    <property type="method" value="X-ray"/>
    <property type="resolution" value="2.80 A"/>
    <property type="chains" value="E=2-289"/>
</dbReference>
<dbReference type="PDB" id="1V41">
    <property type="method" value="X-ray"/>
    <property type="resolution" value="2.85 A"/>
    <property type="chains" value="E=2-289"/>
</dbReference>
<dbReference type="PDB" id="1V45">
    <property type="method" value="X-ray"/>
    <property type="resolution" value="2.86 A"/>
    <property type="chains" value="E=2-289"/>
</dbReference>
<dbReference type="PDB" id="1YRY">
    <property type="method" value="X-ray"/>
    <property type="resolution" value="2.80 A"/>
    <property type="chains" value="E=1-289"/>
</dbReference>
<dbReference type="PDB" id="2A0W">
    <property type="method" value="X-ray"/>
    <property type="resolution" value="2.28 A"/>
    <property type="chains" value="A=1-289"/>
</dbReference>
<dbReference type="PDB" id="2A0X">
    <property type="method" value="X-ray"/>
    <property type="resolution" value="2.28 A"/>
    <property type="chains" value="A=1-289"/>
</dbReference>
<dbReference type="PDB" id="2A0Y">
    <property type="method" value="X-ray"/>
    <property type="resolution" value="2.28 A"/>
    <property type="chains" value="A=1-289"/>
</dbReference>
<dbReference type="PDB" id="2OC4">
    <property type="method" value="X-ray"/>
    <property type="resolution" value="2.59 A"/>
    <property type="chains" value="A=1-289"/>
</dbReference>
<dbReference type="PDB" id="2OC9">
    <property type="method" value="X-ray"/>
    <property type="resolution" value="2.59 A"/>
    <property type="chains" value="A=1-289"/>
</dbReference>
<dbReference type="PDB" id="2ON6">
    <property type="method" value="X-ray"/>
    <property type="resolution" value="2.50 A"/>
    <property type="chains" value="A=1-289"/>
</dbReference>
<dbReference type="PDB" id="2Q7O">
    <property type="method" value="X-ray"/>
    <property type="resolution" value="2.90 A"/>
    <property type="chains" value="E=1-289"/>
</dbReference>
<dbReference type="PDB" id="3BGS">
    <property type="method" value="X-ray"/>
    <property type="resolution" value="2.10 A"/>
    <property type="chains" value="A=1-289"/>
</dbReference>
<dbReference type="PDB" id="3D1V">
    <property type="method" value="X-ray"/>
    <property type="resolution" value="2.70 A"/>
    <property type="chains" value="A=1-289"/>
</dbReference>
<dbReference type="PDB" id="3GB9">
    <property type="method" value="X-ray"/>
    <property type="resolution" value="2.30 A"/>
    <property type="chains" value="A/B/C=1-289"/>
</dbReference>
<dbReference type="PDB" id="3GGS">
    <property type="method" value="X-ray"/>
    <property type="resolution" value="2.52 A"/>
    <property type="chains" value="A/B/C=1-289"/>
</dbReference>
<dbReference type="PDB" id="3INY">
    <property type="method" value="X-ray"/>
    <property type="resolution" value="2.75 A"/>
    <property type="chains" value="A=1-289"/>
</dbReference>
<dbReference type="PDB" id="3K8O">
    <property type="method" value="X-ray"/>
    <property type="resolution" value="2.40 A"/>
    <property type="chains" value="E/Q/S/T/U/Y=1-289"/>
</dbReference>
<dbReference type="PDB" id="3K8Q">
    <property type="method" value="X-ray"/>
    <property type="resolution" value="2.50 A"/>
    <property type="chains" value="A=1-289"/>
</dbReference>
<dbReference type="PDB" id="3PHB">
    <property type="method" value="X-ray"/>
    <property type="resolution" value="2.30 A"/>
    <property type="chains" value="E/Q/S/T/U/Y=1-289"/>
</dbReference>
<dbReference type="PDB" id="4EAR">
    <property type="method" value="X-ray"/>
    <property type="resolution" value="1.70 A"/>
    <property type="chains" value="A/B/C=1-289"/>
</dbReference>
<dbReference type="PDB" id="4EB8">
    <property type="method" value="X-ray"/>
    <property type="resolution" value="2.30 A"/>
    <property type="chains" value="A/B/C=1-289"/>
</dbReference>
<dbReference type="PDB" id="4ECE">
    <property type="method" value="X-ray"/>
    <property type="resolution" value="2.60 A"/>
    <property type="chains" value="A/B/C/D/E/F=1-289"/>
</dbReference>
<dbReference type="PDB" id="4GKA">
    <property type="method" value="X-ray"/>
    <property type="resolution" value="2.20 A"/>
    <property type="chains" value="A/B/C/D/E/F=1-289"/>
</dbReference>
<dbReference type="PDB" id="5ETJ">
    <property type="method" value="X-ray"/>
    <property type="resolution" value="2.30 A"/>
    <property type="chains" value="A/B/C/D/E/F=1-289"/>
</dbReference>
<dbReference type="PDB" id="5UGF">
    <property type="method" value="X-ray"/>
    <property type="resolution" value="2.20 A"/>
    <property type="chains" value="A/B/C/D/E/F=1-289"/>
</dbReference>
<dbReference type="PDB" id="7ZSL">
    <property type="method" value="X-ray"/>
    <property type="resolution" value="1.80 A"/>
    <property type="chains" value="A/B/C/D/E/F=1-289"/>
</dbReference>
<dbReference type="PDB" id="7ZSM">
    <property type="method" value="X-ray"/>
    <property type="resolution" value="2.65 A"/>
    <property type="chains" value="A=1-289"/>
</dbReference>
<dbReference type="PDB" id="7ZSN">
    <property type="method" value="X-ray"/>
    <property type="resolution" value="2.36 A"/>
    <property type="chains" value="A=1-289"/>
</dbReference>
<dbReference type="PDB" id="7ZSO">
    <property type="method" value="X-ray"/>
    <property type="resolution" value="1.95 A"/>
    <property type="chains" value="A/B/C=1-289"/>
</dbReference>
<dbReference type="PDB" id="7ZSP">
    <property type="method" value="X-ray"/>
    <property type="resolution" value="2.29 A"/>
    <property type="chains" value="A=1-289"/>
</dbReference>
<dbReference type="PDBsum" id="1M73"/>
<dbReference type="PDBsum" id="1PF7"/>
<dbReference type="PDBsum" id="1PWY"/>
<dbReference type="PDBsum" id="1RCT"/>
<dbReference type="PDBsum" id="1RFG"/>
<dbReference type="PDBsum" id="1RR6"/>
<dbReference type="PDBsum" id="1RSZ"/>
<dbReference type="PDBsum" id="1RT9"/>
<dbReference type="PDBsum" id="1ULA"/>
<dbReference type="PDBsum" id="1ULB"/>
<dbReference type="PDBsum" id="1V2H"/>
<dbReference type="PDBsum" id="1V3Q"/>
<dbReference type="PDBsum" id="1V41"/>
<dbReference type="PDBsum" id="1V45"/>
<dbReference type="PDBsum" id="1YRY"/>
<dbReference type="PDBsum" id="2A0W"/>
<dbReference type="PDBsum" id="2A0X"/>
<dbReference type="PDBsum" id="2A0Y"/>
<dbReference type="PDBsum" id="2OC4"/>
<dbReference type="PDBsum" id="2OC9"/>
<dbReference type="PDBsum" id="2ON6"/>
<dbReference type="PDBsum" id="2Q7O"/>
<dbReference type="PDBsum" id="3BGS"/>
<dbReference type="PDBsum" id="3D1V"/>
<dbReference type="PDBsum" id="3GB9"/>
<dbReference type="PDBsum" id="3GGS"/>
<dbReference type="PDBsum" id="3INY"/>
<dbReference type="PDBsum" id="3K8O"/>
<dbReference type="PDBsum" id="3K8Q"/>
<dbReference type="PDBsum" id="3PHB"/>
<dbReference type="PDBsum" id="4EAR"/>
<dbReference type="PDBsum" id="4EB8"/>
<dbReference type="PDBsum" id="4ECE"/>
<dbReference type="PDBsum" id="4GKA"/>
<dbReference type="PDBsum" id="5ETJ"/>
<dbReference type="PDBsum" id="5UGF"/>
<dbReference type="PDBsum" id="7ZSL"/>
<dbReference type="PDBsum" id="7ZSM"/>
<dbReference type="PDBsum" id="7ZSN"/>
<dbReference type="PDBsum" id="7ZSO"/>
<dbReference type="PDBsum" id="7ZSP"/>
<dbReference type="SMR" id="P00491"/>
<dbReference type="BioGRID" id="110921">
    <property type="interactions" value="91"/>
</dbReference>
<dbReference type="CORUM" id="P00491"/>
<dbReference type="DIP" id="DIP-50406N"/>
<dbReference type="FunCoup" id="P00491">
    <property type="interactions" value="662"/>
</dbReference>
<dbReference type="IntAct" id="P00491">
    <property type="interactions" value="41"/>
</dbReference>
<dbReference type="MINT" id="P00491"/>
<dbReference type="STRING" id="9606.ENSP00000354532"/>
<dbReference type="BindingDB" id="P00491"/>
<dbReference type="ChEMBL" id="CHEMBL4338"/>
<dbReference type="DrugBank" id="DB03881">
    <property type="generic name" value="(2S,3R,4S,5S)-3,4-Dihydroxy-2-[(methylsulfanyl)methyl]-5-(4-oxo-4,5-dihydro-1H-pyrrolo[3,2-d]pyrimidin-7-yl)pyrrolidinium"/>
</dbReference>
<dbReference type="DrugBank" id="DB03551">
    <property type="generic name" value="(3R,4R)-3-Hydroxy-4-(hydroxymethyl)-1-[(4-oxo-4,4a,5,7a-tetrahydro-3H-pyrrolo[3,2-d]pyrimidin-7-yl)methyl]pyrrolidinium"/>
</dbReference>
<dbReference type="DrugBank" id="DB02222">
    <property type="generic name" value="2,6-Diamino-(S)-9-[2-(Phosphonomethoxy)Propyl]Purine"/>
</dbReference>
<dbReference type="DrugBank" id="DB02391">
    <property type="generic name" value="2-Amino-7-[2-(2-Hydroxy-1-Hydroxymethyl-Ethylamino)-Ethyl]-1,7-Dihydro-Purin-6-One"/>
</dbReference>
<dbReference type="DrugBank" id="DB03411">
    <property type="generic name" value="2-Hydroxymethyl-Pyrrolidine-3,4-Diol"/>
</dbReference>
<dbReference type="DrugBank" id="DB03609">
    <property type="generic name" value="3'-deoxyguanosine"/>
</dbReference>
<dbReference type="DrugBank" id="DB01667">
    <property type="generic name" value="8-azaguanine"/>
</dbReference>
<dbReference type="DrugBank" id="DB02985">
    <property type="generic name" value="8-iodo-guanine"/>
</dbReference>
<dbReference type="DrugBank" id="DB04260">
    <property type="generic name" value="9-(5,5-Difluoro-5-Phosphonopentyl)Guanine"/>
</dbReference>
<dbReference type="DrugBank" id="DB04095">
    <property type="generic name" value="9-Deazahypoxanthine"/>
</dbReference>
<dbReference type="DrugBank" id="DB02796">
    <property type="generic name" value="9-deazainosine"/>
</dbReference>
<dbReference type="DrugBank" id="DB04753">
    <property type="generic name" value="9-DEAZAINOSINE-2',3'-O-ETHYLIDENEPHOSPHONATE"/>
</dbReference>
<dbReference type="DrugBank" id="DB00640">
    <property type="generic name" value="Adenosine"/>
</dbReference>
<dbReference type="DrugBank" id="DB00242">
    <property type="generic name" value="Cladribine"/>
</dbReference>
<dbReference type="DrugBank" id="DB00900">
    <property type="generic name" value="Didanosine"/>
</dbReference>
<dbReference type="DrugBank" id="DB06185">
    <property type="generic name" value="Forodesine"/>
</dbReference>
<dbReference type="DrugBank" id="DB02377">
    <property type="generic name" value="Guanine"/>
</dbReference>
<dbReference type="DrugBank" id="DB02857">
    <property type="generic name" value="Guanosine"/>
</dbReference>
<dbReference type="DrugBank" id="DB04754">
    <property type="generic name" value="GUANOSINE-2',3'-O-ETHYLIDENEPHOSPHONATE"/>
</dbReference>
<dbReference type="DrugBank" id="DB04757">
    <property type="generic name" value="GUANOSINE-2',3'-O-METHYLIDENEPHOSPHONATE"/>
</dbReference>
<dbReference type="DrugBank" id="DB04076">
    <property type="generic name" value="Hypoxanthine"/>
</dbReference>
<dbReference type="DrugBank" id="DB02230">
    <property type="generic name" value="Immucillin-G"/>
</dbReference>
<dbReference type="DrugBank" id="DB04335">
    <property type="generic name" value="Inosine"/>
</dbReference>
<dbReference type="DrugBank" id="DB02568">
    <property type="generic name" value="Peldesine"/>
</dbReference>
<dbReference type="DrugBank" id="DB03101">
    <property type="generic name" value="Ribose-1-Phosphate"/>
</dbReference>
<dbReference type="DrugBank" id="DB12353">
    <property type="generic name" value="Ulodesine"/>
</dbReference>
<dbReference type="DrugCentral" id="P00491"/>
<dbReference type="GuidetoPHARMACOLOGY" id="2841"/>
<dbReference type="GlyGen" id="P00491">
    <property type="glycosylation" value="1 site, 1 O-linked glycan (1 site)"/>
</dbReference>
<dbReference type="iPTMnet" id="P00491"/>
<dbReference type="MetOSite" id="P00491"/>
<dbReference type="PhosphoSitePlus" id="P00491"/>
<dbReference type="SwissPalm" id="P00491"/>
<dbReference type="BioMuta" id="PNP"/>
<dbReference type="DMDM" id="108935929"/>
<dbReference type="OGP" id="P00491"/>
<dbReference type="CPTAC" id="CPTAC-570"/>
<dbReference type="CPTAC" id="CPTAC-571"/>
<dbReference type="jPOST" id="P00491"/>
<dbReference type="MassIVE" id="P00491"/>
<dbReference type="PaxDb" id="9606-ENSP00000354532"/>
<dbReference type="PeptideAtlas" id="P00491"/>
<dbReference type="PRIDE" id="P00491"/>
<dbReference type="ProteomicsDB" id="51256"/>
<dbReference type="Pumba" id="P00491"/>
<dbReference type="TopDownProteomics" id="P00491"/>
<dbReference type="Antibodypedia" id="766">
    <property type="antibodies" value="319 antibodies from 34 providers"/>
</dbReference>
<dbReference type="DNASU" id="4860"/>
<dbReference type="Ensembl" id="ENST00000361505.10">
    <property type="protein sequence ID" value="ENSP00000354532.6"/>
    <property type="gene ID" value="ENSG00000198805.13"/>
</dbReference>
<dbReference type="Ensembl" id="ENST00000697613.1">
    <property type="protein sequence ID" value="ENSP00000513359.1"/>
    <property type="gene ID" value="ENSG00000198805.13"/>
</dbReference>
<dbReference type="Ensembl" id="ENST00000708853.1">
    <property type="protein sequence ID" value="ENSP00000517384.1"/>
    <property type="gene ID" value="ENSG00000291814.1"/>
</dbReference>
<dbReference type="Ensembl" id="ENST00000708857.1">
    <property type="protein sequence ID" value="ENSP00000517386.1"/>
    <property type="gene ID" value="ENSG00000291814.1"/>
</dbReference>
<dbReference type="GeneID" id="4860"/>
<dbReference type="KEGG" id="hsa:4860"/>
<dbReference type="MANE-Select" id="ENST00000361505.10">
    <property type="protein sequence ID" value="ENSP00000354532.6"/>
    <property type="RefSeq nucleotide sequence ID" value="NM_000270.4"/>
    <property type="RefSeq protein sequence ID" value="NP_000261.2"/>
</dbReference>
<dbReference type="AGR" id="HGNC:7892"/>
<dbReference type="CTD" id="4860"/>
<dbReference type="DisGeNET" id="4860"/>
<dbReference type="GeneCards" id="PNP"/>
<dbReference type="HGNC" id="HGNC:7892">
    <property type="gene designation" value="PNP"/>
</dbReference>
<dbReference type="HPA" id="ENSG00000198805">
    <property type="expression patterns" value="Tissue enhanced (bone marrow, epididymis)"/>
</dbReference>
<dbReference type="MalaCards" id="PNP"/>
<dbReference type="MIM" id="164050">
    <property type="type" value="gene"/>
</dbReference>
<dbReference type="MIM" id="613179">
    <property type="type" value="phenotype"/>
</dbReference>
<dbReference type="neXtProt" id="NX_P00491"/>
<dbReference type="OpenTargets" id="ENSG00000198805"/>
<dbReference type="Orphanet" id="760">
    <property type="disease" value="Purine nucleoside phosphorylase deficiency"/>
</dbReference>
<dbReference type="PharmGKB" id="PA31694"/>
<dbReference type="VEuPathDB" id="HostDB:ENSG00000198805"/>
<dbReference type="eggNOG" id="KOG3984">
    <property type="taxonomic scope" value="Eukaryota"/>
</dbReference>
<dbReference type="GeneTree" id="ENSGT00950000182991"/>
<dbReference type="HOGENOM" id="CLU_054456_1_2_1"/>
<dbReference type="InParanoid" id="P00491"/>
<dbReference type="OMA" id="NIPTHHV"/>
<dbReference type="OrthoDB" id="10261782at2759"/>
<dbReference type="PAN-GO" id="P00491">
    <property type="GO annotations" value="2 GO annotations based on evolutionary models"/>
</dbReference>
<dbReference type="PhylomeDB" id="P00491"/>
<dbReference type="TreeFam" id="TF300049"/>
<dbReference type="BioCyc" id="MetaCyc:HS02151-MONOMER"/>
<dbReference type="BRENDA" id="2.4.2.1">
    <property type="organism ID" value="2681"/>
</dbReference>
<dbReference type="PathwayCommons" id="P00491"/>
<dbReference type="Reactome" id="R-HSA-6798695">
    <property type="pathway name" value="Neutrophil degranulation"/>
</dbReference>
<dbReference type="Reactome" id="R-HSA-74217">
    <property type="pathway name" value="Purine salvage"/>
</dbReference>
<dbReference type="Reactome" id="R-HSA-74259">
    <property type="pathway name" value="Purine catabolism"/>
</dbReference>
<dbReference type="Reactome" id="R-HSA-9735763">
    <property type="pathway name" value="Defective PNP disrupts phosphorolysis of (deoxy)guanosine and (deoxy)inosine"/>
</dbReference>
<dbReference type="Reactome" id="R-HSA-9755088">
    <property type="pathway name" value="Ribavirin ADME"/>
</dbReference>
<dbReference type="SABIO-RK" id="P00491"/>
<dbReference type="SignaLink" id="P00491"/>
<dbReference type="UniPathway" id="UPA00606"/>
<dbReference type="BioGRID-ORCS" id="4860">
    <property type="hits" value="10 hits in 1166 CRISPR screens"/>
</dbReference>
<dbReference type="CD-CODE" id="8C2F96ED">
    <property type="entry name" value="Centrosome"/>
</dbReference>
<dbReference type="ChiTaRS" id="PNP">
    <property type="organism name" value="human"/>
</dbReference>
<dbReference type="EvolutionaryTrace" id="P00491"/>
<dbReference type="GeneWiki" id="Purine_nucleoside_phosphorylase"/>
<dbReference type="GenomeRNAi" id="4860"/>
<dbReference type="Pharos" id="P00491">
    <property type="development level" value="Tclin"/>
</dbReference>
<dbReference type="PRO" id="PR:P00491"/>
<dbReference type="Proteomes" id="UP000005640">
    <property type="component" value="Chromosome 14"/>
</dbReference>
<dbReference type="RNAct" id="P00491">
    <property type="molecule type" value="protein"/>
</dbReference>
<dbReference type="Bgee" id="ENSG00000198805">
    <property type="expression patterns" value="Expressed in corpus epididymis and 171 other cell types or tissues"/>
</dbReference>
<dbReference type="ExpressionAtlas" id="P00491">
    <property type="expression patterns" value="baseline and differential"/>
</dbReference>
<dbReference type="GO" id="GO:0005737">
    <property type="term" value="C:cytoplasm"/>
    <property type="evidence" value="ECO:0000314"/>
    <property type="project" value="UniProtKB"/>
</dbReference>
<dbReference type="GO" id="GO:0005829">
    <property type="term" value="C:cytosol"/>
    <property type="evidence" value="ECO:0000314"/>
    <property type="project" value="HPA"/>
</dbReference>
<dbReference type="GO" id="GO:0070062">
    <property type="term" value="C:extracellular exosome"/>
    <property type="evidence" value="ECO:0007005"/>
    <property type="project" value="UniProtKB"/>
</dbReference>
<dbReference type="GO" id="GO:0005576">
    <property type="term" value="C:extracellular region"/>
    <property type="evidence" value="ECO:0000304"/>
    <property type="project" value="Reactome"/>
</dbReference>
<dbReference type="GO" id="GO:1904813">
    <property type="term" value="C:ficolin-1-rich granule lumen"/>
    <property type="evidence" value="ECO:0000304"/>
    <property type="project" value="Reactome"/>
</dbReference>
<dbReference type="GO" id="GO:0034774">
    <property type="term" value="C:secretory granule lumen"/>
    <property type="evidence" value="ECO:0000304"/>
    <property type="project" value="Reactome"/>
</dbReference>
<dbReference type="GO" id="GO:0047975">
    <property type="term" value="F:guanosine phosphorylase activity"/>
    <property type="evidence" value="ECO:0007669"/>
    <property type="project" value="RHEA"/>
</dbReference>
<dbReference type="GO" id="GO:0042802">
    <property type="term" value="F:identical protein binding"/>
    <property type="evidence" value="ECO:0000353"/>
    <property type="project" value="IntAct"/>
</dbReference>
<dbReference type="GO" id="GO:0001882">
    <property type="term" value="F:nucleoside binding"/>
    <property type="evidence" value="ECO:0000314"/>
    <property type="project" value="UniProtKB"/>
</dbReference>
<dbReference type="GO" id="GO:0042301">
    <property type="term" value="F:phosphate ion binding"/>
    <property type="evidence" value="ECO:0000314"/>
    <property type="project" value="UniProtKB"/>
</dbReference>
<dbReference type="GO" id="GO:0002060">
    <property type="term" value="F:purine nucleobase binding"/>
    <property type="evidence" value="ECO:0000314"/>
    <property type="project" value="UniProtKB"/>
</dbReference>
<dbReference type="GO" id="GO:0004731">
    <property type="term" value="F:purine-nucleoside phosphorylase activity"/>
    <property type="evidence" value="ECO:0000314"/>
    <property type="project" value="UniProtKB"/>
</dbReference>
<dbReference type="GO" id="GO:0000255">
    <property type="term" value="P:allantoin metabolic process"/>
    <property type="evidence" value="ECO:0000314"/>
    <property type="project" value="MGI"/>
</dbReference>
<dbReference type="GO" id="GO:0046059">
    <property type="term" value="P:dAMP catabolic process"/>
    <property type="evidence" value="ECO:0000314"/>
    <property type="project" value="MGI"/>
</dbReference>
<dbReference type="GO" id="GO:0006157">
    <property type="term" value="P:deoxyadenosine catabolic process"/>
    <property type="evidence" value="ECO:0000314"/>
    <property type="project" value="MGI"/>
</dbReference>
<dbReference type="GO" id="GO:0006149">
    <property type="term" value="P:deoxyinosine catabolic process"/>
    <property type="evidence" value="ECO:0000314"/>
    <property type="project" value="MGI"/>
</dbReference>
<dbReference type="GO" id="GO:0006955">
    <property type="term" value="P:immune response"/>
    <property type="evidence" value="ECO:0000315"/>
    <property type="project" value="UniProtKB"/>
</dbReference>
<dbReference type="GO" id="GO:0006204">
    <property type="term" value="P:IMP catabolic process"/>
    <property type="evidence" value="ECO:0000314"/>
    <property type="project" value="MGI"/>
</dbReference>
<dbReference type="GO" id="GO:0006148">
    <property type="term" value="P:inosine catabolic process"/>
    <property type="evidence" value="ECO:0000314"/>
    <property type="project" value="UniProtKB"/>
</dbReference>
<dbReference type="GO" id="GO:0006738">
    <property type="term" value="P:nicotinamide riboside catabolic process"/>
    <property type="evidence" value="ECO:0000314"/>
    <property type="project" value="UniProtKB"/>
</dbReference>
<dbReference type="GO" id="GO:0006139">
    <property type="term" value="P:nucleobase-containing compound metabolic process"/>
    <property type="evidence" value="ECO:0000314"/>
    <property type="project" value="UniProtKB"/>
</dbReference>
<dbReference type="GO" id="GO:0009165">
    <property type="term" value="P:nucleotide biosynthetic process"/>
    <property type="evidence" value="ECO:0000316"/>
    <property type="project" value="UniProtKB"/>
</dbReference>
<dbReference type="GO" id="GO:0046638">
    <property type="term" value="P:positive regulation of alpha-beta T cell differentiation"/>
    <property type="evidence" value="ECO:0000314"/>
    <property type="project" value="MGI"/>
</dbReference>
<dbReference type="GO" id="GO:0032743">
    <property type="term" value="P:positive regulation of interleukin-2 production"/>
    <property type="evidence" value="ECO:0000315"/>
    <property type="project" value="UniProtKB"/>
</dbReference>
<dbReference type="GO" id="GO:0042102">
    <property type="term" value="P:positive regulation of T cell proliferation"/>
    <property type="evidence" value="ECO:0000314"/>
    <property type="project" value="MGI"/>
</dbReference>
<dbReference type="GO" id="GO:0006166">
    <property type="term" value="P:purine ribonucleoside salvage"/>
    <property type="evidence" value="ECO:0007669"/>
    <property type="project" value="UniProtKB-KW"/>
</dbReference>
<dbReference type="GO" id="GO:0043101">
    <property type="term" value="P:purine-containing compound salvage"/>
    <property type="evidence" value="ECO:0000314"/>
    <property type="project" value="UniProtKB"/>
</dbReference>
<dbReference type="GO" id="GO:0009410">
    <property type="term" value="P:response to xenobiotic stimulus"/>
    <property type="evidence" value="ECO:0000315"/>
    <property type="project" value="UniProtKB"/>
</dbReference>
<dbReference type="GO" id="GO:0034418">
    <property type="term" value="P:urate biosynthetic process"/>
    <property type="evidence" value="ECO:0000314"/>
    <property type="project" value="MGI"/>
</dbReference>
<dbReference type="CDD" id="cd09009">
    <property type="entry name" value="PNP-EcPNPII_like"/>
    <property type="match status" value="1"/>
</dbReference>
<dbReference type="FunFam" id="3.40.50.1580:FF:000004">
    <property type="entry name" value="Purine nucleoside phosphorylase"/>
    <property type="match status" value="1"/>
</dbReference>
<dbReference type="Gene3D" id="3.40.50.1580">
    <property type="entry name" value="Nucleoside phosphorylase domain"/>
    <property type="match status" value="1"/>
</dbReference>
<dbReference type="InterPro" id="IPR000845">
    <property type="entry name" value="Nucleoside_phosphorylase_d"/>
</dbReference>
<dbReference type="InterPro" id="IPR035994">
    <property type="entry name" value="Nucleoside_phosphorylase_sf"/>
</dbReference>
<dbReference type="InterPro" id="IPR011270">
    <property type="entry name" value="Pur_Nuc_Pase_Ino/Guo-sp"/>
</dbReference>
<dbReference type="InterPro" id="IPR011268">
    <property type="entry name" value="Purine_phosphorylase"/>
</dbReference>
<dbReference type="InterPro" id="IPR018099">
    <property type="entry name" value="Purine_phosphorylase-2_CS"/>
</dbReference>
<dbReference type="NCBIfam" id="TIGR01700">
    <property type="entry name" value="PNPH"/>
    <property type="match status" value="1"/>
</dbReference>
<dbReference type="NCBIfam" id="TIGR01697">
    <property type="entry name" value="PNPH-PUNA-XAPA"/>
    <property type="match status" value="1"/>
</dbReference>
<dbReference type="NCBIfam" id="NF006054">
    <property type="entry name" value="PRK08202.1"/>
    <property type="match status" value="1"/>
</dbReference>
<dbReference type="PANTHER" id="PTHR11904">
    <property type="entry name" value="METHYLTHIOADENOSINE/PURINE NUCLEOSIDE PHOSPHORYLASE"/>
    <property type="match status" value="1"/>
</dbReference>
<dbReference type="PANTHER" id="PTHR11904:SF12">
    <property type="entry name" value="PURINE NUCLEOSIDE PHOSPHORYLASE"/>
    <property type="match status" value="1"/>
</dbReference>
<dbReference type="Pfam" id="PF01048">
    <property type="entry name" value="PNP_UDP_1"/>
    <property type="match status" value="1"/>
</dbReference>
<dbReference type="PIRSF" id="PIRSF000477">
    <property type="entry name" value="PurNPase"/>
    <property type="match status" value="1"/>
</dbReference>
<dbReference type="SUPFAM" id="SSF53167">
    <property type="entry name" value="Purine and uridine phosphorylases"/>
    <property type="match status" value="1"/>
</dbReference>
<dbReference type="PROSITE" id="PS01240">
    <property type="entry name" value="PNP_MTAP_2"/>
    <property type="match status" value="1"/>
</dbReference>
<protein>
    <recommendedName>
        <fullName>Purine nucleoside phosphorylase</fullName>
        <shortName>PNP</shortName>
        <ecNumber evidence="8 12">2.4.2.1</ecNumber>
    </recommendedName>
    <alternativeName>
        <fullName>Inosine phosphorylase</fullName>
    </alternativeName>
    <alternativeName>
        <fullName>Inosine-guanosine phosphorylase</fullName>
    </alternativeName>
</protein>
<gene>
    <name type="primary">PNP</name>
    <name type="synonym">NP</name>
</gene>
<keyword id="KW-0002">3D-structure</keyword>
<keyword id="KW-0007">Acetylation</keyword>
<keyword id="KW-0963">Cytoplasm</keyword>
<keyword id="KW-0903">Direct protein sequencing</keyword>
<keyword id="KW-0225">Disease variant</keyword>
<keyword id="KW-0328">Glycosyltransferase</keyword>
<keyword id="KW-0597">Phosphoprotein</keyword>
<keyword id="KW-1267">Proteomics identification</keyword>
<keyword id="KW-0660">Purine salvage</keyword>
<keyword id="KW-1185">Reference proteome</keyword>
<keyword id="KW-0808">Transferase</keyword>
<feature type="chain" id="PRO_0000184536" description="Purine nucleoside phosphorylase">
    <location>
        <begin position="1"/>
        <end position="289"/>
    </location>
</feature>
<feature type="binding site" evidence="8 15 16 18 19 20 22 23 25">
    <location>
        <position position="33"/>
    </location>
    <ligand>
        <name>phosphate</name>
        <dbReference type="ChEBI" id="CHEBI:43474"/>
    </ligand>
</feature>
<feature type="binding site" evidence="2">
    <location>
        <position position="64"/>
    </location>
    <ligand>
        <name>phosphate</name>
        <dbReference type="ChEBI" id="CHEBI:43474"/>
    </ligand>
</feature>
<feature type="binding site" evidence="8 15 16 18 19 20 21 22 23 25">
    <location>
        <begin position="84"/>
        <end position="86"/>
    </location>
    <ligand>
        <name>phosphate</name>
        <dbReference type="ChEBI" id="CHEBI:43474"/>
    </ligand>
</feature>
<feature type="binding site" evidence="6 8 18 22 23">
    <location>
        <position position="88"/>
    </location>
    <ligand>
        <name>a purine D-ribonucleoside</name>
        <dbReference type="ChEBI" id="CHEBI:142355"/>
    </ligand>
</feature>
<feature type="binding site" evidence="6 8 16 18 20 22 23 25">
    <location>
        <position position="116"/>
    </location>
    <ligand>
        <name>phosphate</name>
        <dbReference type="ChEBI" id="CHEBI:43474"/>
    </ligand>
</feature>
<feature type="binding site" evidence="6 8 16 18 20 22 23 25">
    <location>
        <position position="201"/>
    </location>
    <ligand>
        <name>a purine D-ribonucleoside</name>
        <dbReference type="ChEBI" id="CHEBI:142355"/>
    </ligand>
</feature>
<feature type="binding site" evidence="6 18">
    <location>
        <position position="219"/>
    </location>
    <ligand>
        <name>a purine D-ribonucleoside</name>
        <dbReference type="ChEBI" id="CHEBI:142355"/>
    </ligand>
</feature>
<feature type="binding site" evidence="6 8 16 18 20 22 23 25">
    <location>
        <position position="220"/>
    </location>
    <ligand>
        <name>phosphate</name>
        <dbReference type="ChEBI" id="CHEBI:43474"/>
    </ligand>
</feature>
<feature type="binding site" evidence="6 8 16 18 20 22 23 25">
    <location>
        <position position="243"/>
    </location>
    <ligand>
        <name>a purine D-ribonucleoside</name>
        <dbReference type="ChEBI" id="CHEBI:142355"/>
    </ligand>
</feature>
<feature type="binding site" evidence="6 18">
    <location>
        <position position="257"/>
    </location>
    <ligand>
        <name>a purine D-ribonucleoside</name>
        <dbReference type="ChEBI" id="CHEBI:142355"/>
    </ligand>
</feature>
<feature type="site" description="Important for substrate specificity" evidence="12">
    <location>
        <position position="243"/>
    </location>
</feature>
<feature type="modified residue" description="N-acetylmethionine" evidence="13 26 27">
    <location>
        <position position="1"/>
    </location>
</feature>
<feature type="modified residue" description="Phosphoserine" evidence="28">
    <location>
        <position position="251"/>
    </location>
</feature>
<feature type="sequence variant" id="VAR_002243" description="In dbSNP:rs1049564." evidence="3 4 5 9 10">
    <original>G</original>
    <variation>S</variation>
    <location>
        <position position="51"/>
    </location>
</feature>
<feature type="sequence variant" id="VAR_002244" description="In PNPD; dbSNP:rs104894453." evidence="9">
    <original>E</original>
    <variation>K</variation>
    <location>
        <position position="89"/>
    </location>
</feature>
<feature type="sequence variant" id="VAR_002245" description="In PNPD; dbSNP:rs104894450." evidence="4">
    <original>D</original>
    <variation>G</variation>
    <location>
        <position position="128"/>
    </location>
</feature>
<feature type="sequence variant" id="VAR_002246" description="In PNPD; dbSNP:rs104894454.">
    <original>A</original>
    <variation>P</variation>
    <location>
        <position position="174"/>
    </location>
</feature>
<feature type="sequence variant" id="VAR_010653" description="In PNPD; dbSNP:rs104894452." evidence="11">
    <original>Y</original>
    <variation>C</variation>
    <location>
        <position position="192"/>
    </location>
</feature>
<feature type="sequence variant" id="VAR_002247" description="In PNPD; dbSNP:rs104894451." evidence="4">
    <original>R</original>
    <variation>P</variation>
    <location>
        <position position="234"/>
    </location>
</feature>
<feature type="mutagenesis site" description="Reduces catalytic activity towards inosine." evidence="8">
    <original>H</original>
    <variation>W</variation>
    <location>
        <position position="64"/>
    </location>
</feature>
<feature type="mutagenesis site" description="Severe loss of catalytic activity." evidence="12">
    <original>E</original>
    <variation>A</variation>
    <variation>Q</variation>
    <location>
        <position position="201"/>
    </location>
</feature>
<feature type="mutagenesis site" description="Reduces catalytic activity." evidence="12">
    <original>N</original>
    <variation>A</variation>
    <location>
        <position position="243"/>
    </location>
</feature>
<feature type="mutagenesis site" description="Reduces catalytic activity towards inosine, hypoxanthine, guanosine and guanine. Increases catalytic activity towards adenosine and adenine." evidence="12">
    <original>N</original>
    <variation>D</variation>
    <location>
        <position position="243"/>
    </location>
</feature>
<feature type="mutagenesis site" description="Reduces catalytic activity towards inosine." evidence="8">
    <original>H</original>
    <variation>W</variation>
    <location>
        <position position="257"/>
    </location>
</feature>
<feature type="helix" evidence="34">
    <location>
        <begin position="7"/>
        <end position="20"/>
    </location>
</feature>
<feature type="strand" evidence="34">
    <location>
        <begin position="26"/>
        <end position="31"/>
    </location>
</feature>
<feature type="helix" evidence="34">
    <location>
        <begin position="36"/>
        <end position="41"/>
    </location>
</feature>
<feature type="strand" evidence="34">
    <location>
        <begin position="43"/>
        <end position="49"/>
    </location>
</feature>
<feature type="helix" evidence="34">
    <location>
        <begin position="50"/>
        <end position="52"/>
    </location>
</feature>
<feature type="strand" evidence="30">
    <location>
        <begin position="53"/>
        <end position="55"/>
    </location>
</feature>
<feature type="strand" evidence="35">
    <location>
        <begin position="61"/>
        <end position="64"/>
    </location>
</feature>
<feature type="strand" evidence="34">
    <location>
        <begin position="67"/>
        <end position="73"/>
    </location>
</feature>
<feature type="strand" evidence="34">
    <location>
        <begin position="76"/>
        <end position="83"/>
    </location>
</feature>
<feature type="helix" evidence="34">
    <location>
        <begin position="87"/>
        <end position="89"/>
    </location>
</feature>
<feature type="helix" evidence="34">
    <location>
        <begin position="93"/>
        <end position="96"/>
    </location>
</feature>
<feature type="helix" evidence="34">
    <location>
        <begin position="98"/>
        <end position="106"/>
    </location>
</feature>
<feature type="strand" evidence="34">
    <location>
        <begin position="110"/>
        <end position="119"/>
    </location>
</feature>
<feature type="strand" evidence="32">
    <location>
        <begin position="121"/>
        <end position="123"/>
    </location>
</feature>
<feature type="strand" evidence="34">
    <location>
        <begin position="129"/>
        <end position="137"/>
    </location>
</feature>
<feature type="helix" evidence="34">
    <location>
        <begin position="138"/>
        <end position="141"/>
    </location>
</feature>
<feature type="turn" evidence="34">
    <location>
        <begin position="153"/>
        <end position="155"/>
    </location>
</feature>
<feature type="turn" evidence="33">
    <location>
        <begin position="163"/>
        <end position="166"/>
    </location>
</feature>
<feature type="helix" evidence="34">
    <location>
        <begin position="168"/>
        <end position="179"/>
    </location>
</feature>
<feature type="turn" evidence="31">
    <location>
        <begin position="180"/>
        <end position="182"/>
    </location>
</feature>
<feature type="strand" evidence="34">
    <location>
        <begin position="188"/>
        <end position="194"/>
    </location>
</feature>
<feature type="strand" evidence="29">
    <location>
        <begin position="197"/>
        <end position="199"/>
    </location>
</feature>
<feature type="helix" evidence="34">
    <location>
        <begin position="203"/>
        <end position="211"/>
    </location>
</feature>
<feature type="strand" evidence="34">
    <location>
        <begin position="215"/>
        <end position="221"/>
    </location>
</feature>
<feature type="helix" evidence="34">
    <location>
        <begin position="222"/>
        <end position="230"/>
    </location>
</feature>
<feature type="strand" evidence="34">
    <location>
        <begin position="234"/>
        <end position="244"/>
    </location>
</feature>
<feature type="strand" evidence="34">
    <location>
        <begin position="248"/>
        <end position="250"/>
    </location>
</feature>
<feature type="helix" evidence="34">
    <location>
        <begin position="257"/>
        <end position="266"/>
    </location>
</feature>
<feature type="helix" evidence="34">
    <location>
        <begin position="268"/>
        <end position="280"/>
    </location>
</feature>
<feature type="turn" evidence="29">
    <location>
        <begin position="285"/>
        <end position="287"/>
    </location>
</feature>
<accession>P00491</accession>
<accession>B2R8S5</accession>
<accession>D3DS00</accession>
<accession>Q15160</accession>
<accession>Q5PZ03</accession>
<proteinExistence type="evidence at protein level"/>
<evidence type="ECO:0000250" key="1">
    <source>
        <dbReference type="UniProtKB" id="P23492"/>
    </source>
</evidence>
<evidence type="ECO:0000250" key="2">
    <source>
        <dbReference type="UniProtKB" id="P55859"/>
    </source>
</evidence>
<evidence type="ECO:0000269" key="3">
    <source>
    </source>
</evidence>
<evidence type="ECO:0000269" key="4">
    <source>
    </source>
</evidence>
<evidence type="ECO:0000269" key="5">
    <source>
    </source>
</evidence>
<evidence type="ECO:0000269" key="6">
    <source>
    </source>
</evidence>
<evidence type="ECO:0000269" key="7">
    <source>
    </source>
</evidence>
<evidence type="ECO:0000269" key="8">
    <source>
    </source>
</evidence>
<evidence type="ECO:0000269" key="9">
    <source>
    </source>
</evidence>
<evidence type="ECO:0000269" key="10">
    <source>
    </source>
</evidence>
<evidence type="ECO:0000269" key="11">
    <source>
    </source>
</evidence>
<evidence type="ECO:0000269" key="12">
    <source>
    </source>
</evidence>
<evidence type="ECO:0000269" key="13">
    <source ref="8"/>
</evidence>
<evidence type="ECO:0000305" key="14"/>
<evidence type="ECO:0000305" key="15">
    <source>
    </source>
</evidence>
<evidence type="ECO:0000305" key="16">
    <source>
    </source>
</evidence>
<evidence type="ECO:0000305" key="17">
    <source>
    </source>
</evidence>
<evidence type="ECO:0007744" key="18">
    <source>
        <dbReference type="PDB" id="1RCT"/>
    </source>
</evidence>
<evidence type="ECO:0007744" key="19">
    <source>
        <dbReference type="PDB" id="1ULA"/>
    </source>
</evidence>
<evidence type="ECO:0007744" key="20">
    <source>
        <dbReference type="PDB" id="1ULB"/>
    </source>
</evidence>
<evidence type="ECO:0007744" key="21">
    <source>
        <dbReference type="PDB" id="1V3Q"/>
    </source>
</evidence>
<evidence type="ECO:0007744" key="22">
    <source>
        <dbReference type="PDB" id="4EAR"/>
    </source>
</evidence>
<evidence type="ECO:0007744" key="23">
    <source>
        <dbReference type="PDB" id="4EB8"/>
    </source>
</evidence>
<evidence type="ECO:0007744" key="24">
    <source>
        <dbReference type="PDB" id="4ECE"/>
    </source>
</evidence>
<evidence type="ECO:0007744" key="25">
    <source>
        <dbReference type="PDB" id="4GKA"/>
    </source>
</evidence>
<evidence type="ECO:0007744" key="26">
    <source>
    </source>
</evidence>
<evidence type="ECO:0007744" key="27">
    <source>
    </source>
</evidence>
<evidence type="ECO:0007744" key="28">
    <source>
    </source>
</evidence>
<evidence type="ECO:0007829" key="29">
    <source>
        <dbReference type="PDB" id="1M73"/>
    </source>
</evidence>
<evidence type="ECO:0007829" key="30">
    <source>
        <dbReference type="PDB" id="1PWY"/>
    </source>
</evidence>
<evidence type="ECO:0007829" key="31">
    <source>
        <dbReference type="PDB" id="1RSZ"/>
    </source>
</evidence>
<evidence type="ECO:0007829" key="32">
    <source>
        <dbReference type="PDB" id="1V2H"/>
    </source>
</evidence>
<evidence type="ECO:0007829" key="33">
    <source>
        <dbReference type="PDB" id="1V41"/>
    </source>
</evidence>
<evidence type="ECO:0007829" key="34">
    <source>
        <dbReference type="PDB" id="4EAR"/>
    </source>
</evidence>
<evidence type="ECO:0007829" key="35">
    <source>
        <dbReference type="PDB" id="7ZSO"/>
    </source>
</evidence>
<comment type="function">
    <text evidence="8 12">Catalyzes the phosphorolytic breakdown of the N-glycosidic bond in the beta-(deoxy)ribonucleoside molecules, with the formation of the corresponding free purine bases and pentose-1-phosphate (PubMed:23438750, PubMed:9305964). Preferentially acts on 6-oxopurine nucleosides including inosine and guanosine (PubMed:9305964).</text>
</comment>
<comment type="catalytic activity">
    <reaction evidence="8 12">
        <text>inosine + phosphate = alpha-D-ribose 1-phosphate + hypoxanthine</text>
        <dbReference type="Rhea" id="RHEA:27646"/>
        <dbReference type="ChEBI" id="CHEBI:17368"/>
        <dbReference type="ChEBI" id="CHEBI:17596"/>
        <dbReference type="ChEBI" id="CHEBI:43474"/>
        <dbReference type="ChEBI" id="CHEBI:57720"/>
        <dbReference type="EC" id="2.4.2.1"/>
    </reaction>
</comment>
<comment type="catalytic activity">
    <reaction evidence="12">
        <text>guanosine + phosphate = alpha-D-ribose 1-phosphate + guanine</text>
        <dbReference type="Rhea" id="RHEA:13233"/>
        <dbReference type="ChEBI" id="CHEBI:16235"/>
        <dbReference type="ChEBI" id="CHEBI:16750"/>
        <dbReference type="ChEBI" id="CHEBI:43474"/>
        <dbReference type="ChEBI" id="CHEBI:57720"/>
        <dbReference type="EC" id="2.4.2.1"/>
    </reaction>
</comment>
<comment type="catalytic activity">
    <reaction evidence="1">
        <text>2'-deoxyguanosine + phosphate = 2-deoxy-alpha-D-ribose 1-phosphate + guanine</text>
        <dbReference type="Rhea" id="RHEA:27738"/>
        <dbReference type="ChEBI" id="CHEBI:16235"/>
        <dbReference type="ChEBI" id="CHEBI:17172"/>
        <dbReference type="ChEBI" id="CHEBI:43474"/>
        <dbReference type="ChEBI" id="CHEBI:57259"/>
        <dbReference type="EC" id="2.4.2.1"/>
    </reaction>
</comment>
<comment type="catalytic activity">
    <reaction evidence="1">
        <text>2'-deoxyinosine + phosphate = 2-deoxy-alpha-D-ribose 1-phosphate + hypoxanthine</text>
        <dbReference type="Rhea" id="RHEA:27750"/>
        <dbReference type="ChEBI" id="CHEBI:17368"/>
        <dbReference type="ChEBI" id="CHEBI:28997"/>
        <dbReference type="ChEBI" id="CHEBI:43474"/>
        <dbReference type="ChEBI" id="CHEBI:57259"/>
        <dbReference type="EC" id="2.4.2.1"/>
    </reaction>
</comment>
<comment type="activity regulation">
    <text evidence="8">Inhibited by 5'-deaza-1'-aza-2c-deoxy-1'-(9-methylene)-Immucilin-G (DADMe-ImmG).</text>
</comment>
<comment type="biophysicochemical properties">
    <kinetics>
        <KM evidence="12">45 uM for inosine (at 30 degrees Celsius and pH 7)</KM>
        <KM evidence="8">68 uM for inosine (at 25 degrees Celsius and pH 7.4)</KM>
        <KM evidence="12">10 uM for hypoxanthine (at 30 degrees Celsius and pH 7)</KM>
        <KM evidence="12">6 uM for guanosine (at 30 degrees Celsius and pH 7)</KM>
        <KM evidence="12">12 uM for guanine (at 30 degrees Celsius and pH 7)</KM>
        <KM evidence="12">650 uM for adenosine (at 30 degrees Celsius and pH 7)</KM>
        <KM evidence="12">440 uM for adenine (at 30 degrees Celsius and pH 7)</KM>
        <text evidence="8 12">kcat is 57 sec(-1) with inosine as substrate (PubMed:9305964). kcat is 47 sec(-1) with inosine as substrate (PubMed:23438750). kcat is 70 sec(-1) with hypoxanthine as substrate (PubMed:9305964). kcat is 28 sec(-1) with guanosine as substrate (PubMed:9305964). kcat is 48 sec(-1) with guanine as substrate (PubMed:9305964). kcat is 0.0024 sec(-1) with adenosine as substrate (PubMed:9305964). kcat is 0.31 sec(-1) with adenine as substrate (PubMed:9305964).</text>
    </kinetics>
</comment>
<comment type="pathway">
    <text evidence="12">Purine metabolism; purine nucleoside salvage.</text>
</comment>
<comment type="subunit">
    <text evidence="17">Homotrimer.</text>
</comment>
<comment type="interaction">
    <interactant intactId="EBI-712238">
        <id>P00491</id>
    </interactant>
    <interactant intactId="EBI-77613">
        <id>P05067</id>
        <label>APP</label>
    </interactant>
    <organismsDiffer>false</organismsDiffer>
    <experiments>9</experiments>
</comment>
<comment type="interaction">
    <interactant intactId="EBI-712238">
        <id>P00491</id>
    </interactant>
    <interactant intactId="EBI-1383687">
        <id>Q9UQM7</id>
        <label>CAMK2A</label>
    </interactant>
    <organismsDiffer>false</organismsDiffer>
    <experiments>3</experiments>
</comment>
<comment type="interaction">
    <interactant intactId="EBI-712238">
        <id>P00491</id>
    </interactant>
    <interactant intactId="EBI-25840445">
        <id>O14576-2</id>
        <label>DYNC1I1</label>
    </interactant>
    <organismsDiffer>false</organismsDiffer>
    <experiments>3</experiments>
</comment>
<comment type="interaction">
    <interactant intactId="EBI-712238">
        <id>P00491</id>
    </interactant>
    <interactant intactId="EBI-515315">
        <id>P06241</id>
        <label>FYN</label>
    </interactant>
    <organismsDiffer>false</organismsDiffer>
    <experiments>3</experiments>
</comment>
<comment type="interaction">
    <interactant intactId="EBI-712238">
        <id>P00491</id>
    </interactant>
    <interactant intactId="EBI-744302">
        <id>P14136</id>
        <label>GFAP</label>
    </interactant>
    <organismsDiffer>false</organismsDiffer>
    <experiments>3</experiments>
</comment>
<comment type="interaction">
    <interactant intactId="EBI-712238">
        <id>P00491</id>
    </interactant>
    <interactant intactId="EBI-20795332">
        <id>Q92993-2</id>
        <label>KAT5</label>
    </interactant>
    <organismsDiffer>false</organismsDiffer>
    <experiments>3</experiments>
</comment>
<comment type="interaction">
    <interactant intactId="EBI-712238">
        <id>P00491</id>
    </interactant>
    <interactant intactId="EBI-2846068">
        <id>Q9BXM7</id>
        <label>PINK1</label>
    </interactant>
    <organismsDiffer>false</organismsDiffer>
    <experiments>3</experiments>
</comment>
<comment type="interaction">
    <interactant intactId="EBI-712238">
        <id>P00491</id>
    </interactant>
    <interactant intactId="EBI-712238">
        <id>P00491</id>
        <label>PNP</label>
    </interactant>
    <organismsDiffer>false</organismsDiffer>
    <experiments>6</experiments>
</comment>
<comment type="interaction">
    <interactant intactId="EBI-712238">
        <id>P00491</id>
    </interactant>
    <interactant intactId="EBI-476586">
        <id>P17612</id>
        <label>PRKACA</label>
    </interactant>
    <organismsDiffer>false</organismsDiffer>
    <experiments>3</experiments>
</comment>
<comment type="interaction">
    <interactant intactId="EBI-712238">
        <id>P00491</id>
    </interactant>
    <interactant intactId="EBI-413628">
        <id>P63000</id>
        <label>RAC1</label>
    </interactant>
    <organismsDiffer>false</organismsDiffer>
    <experiments>3</experiments>
</comment>
<comment type="interaction">
    <interactant intactId="EBI-712238">
        <id>P00491</id>
    </interactant>
    <interactant intactId="EBI-1171329">
        <id>Q92673</id>
        <label>SORL1</label>
    </interactant>
    <organismsDiffer>false</organismsDiffer>
    <experiments>3</experiments>
</comment>
<comment type="interaction">
    <interactant intactId="EBI-712238">
        <id>P00491</id>
    </interactant>
    <interactant intactId="EBI-714215">
        <id>Q15583</id>
        <label>TGIF1</label>
    </interactant>
    <organismsDiffer>false</organismsDiffer>
    <experiments>3</experiments>
</comment>
<comment type="subcellular location">
    <subcellularLocation>
        <location evidence="7">Cytoplasm</location>
    </subcellularLocation>
</comment>
<comment type="tissue specificity">
    <text evidence="7">Expressed in red blood cells; overexpressed in red blood cells (cytoplasm) of patients with hereditary non-spherocytic hemolytic anemia of unknown etiology.</text>
</comment>
<comment type="disease" evidence="4 9 11">
    <disease id="DI-02081">
        <name>Purine nucleoside phosphorylase deficiency</name>
        <acronym>PNPD</acronym>
        <description>A disorder that interrupts both the catabolism of inosine into hypoxanthine and guanosine into guanine, and leads to the accumulation of guanosine, inosine, and their deoxified by-products. The main clinical presentation is recurrent infections due to severe T-cell immunodeficiency. Some patients also have neurologic impairment.</description>
        <dbReference type="MIM" id="613179"/>
    </disease>
    <text>The disease is caused by variants affecting the gene represented in this entry.</text>
</comment>
<comment type="similarity">
    <text evidence="14">Belongs to the PNP/MTAP phosphorylase family.</text>
</comment>
<comment type="online information" name="NPbase">
    <link uri="https://databases.lovd.nl/shared/genes/PNP"/>
    <text>NP mutation db</text>
</comment>